<name>RL36_RICAE</name>
<organism>
    <name type="scientific">Rickettsia africae (strain ESF-5)</name>
    <dbReference type="NCBI Taxonomy" id="347255"/>
    <lineage>
        <taxon>Bacteria</taxon>
        <taxon>Pseudomonadati</taxon>
        <taxon>Pseudomonadota</taxon>
        <taxon>Alphaproteobacteria</taxon>
        <taxon>Rickettsiales</taxon>
        <taxon>Rickettsiaceae</taxon>
        <taxon>Rickettsieae</taxon>
        <taxon>Rickettsia</taxon>
        <taxon>spotted fever group</taxon>
    </lineage>
</organism>
<gene>
    <name evidence="1" type="primary">rpmJ</name>
    <name type="ordered locus">RAF_ORF0716</name>
</gene>
<accession>C3PNU6</accession>
<evidence type="ECO:0000255" key="1">
    <source>
        <dbReference type="HAMAP-Rule" id="MF_00251"/>
    </source>
</evidence>
<evidence type="ECO:0000305" key="2"/>
<dbReference type="EMBL" id="CP001612">
    <property type="protein sequence ID" value="ACP53606.1"/>
    <property type="molecule type" value="Genomic_DNA"/>
</dbReference>
<dbReference type="SMR" id="C3PNU6"/>
<dbReference type="KEGG" id="raf:RAF_ORF0716"/>
<dbReference type="HOGENOM" id="CLU_135723_3_2_5"/>
<dbReference type="Proteomes" id="UP000002305">
    <property type="component" value="Chromosome"/>
</dbReference>
<dbReference type="GO" id="GO:1990904">
    <property type="term" value="C:ribonucleoprotein complex"/>
    <property type="evidence" value="ECO:0007669"/>
    <property type="project" value="UniProtKB-KW"/>
</dbReference>
<dbReference type="GO" id="GO:0005840">
    <property type="term" value="C:ribosome"/>
    <property type="evidence" value="ECO:0007669"/>
    <property type="project" value="UniProtKB-KW"/>
</dbReference>
<dbReference type="GO" id="GO:0003735">
    <property type="term" value="F:structural constituent of ribosome"/>
    <property type="evidence" value="ECO:0007669"/>
    <property type="project" value="InterPro"/>
</dbReference>
<dbReference type="GO" id="GO:0006412">
    <property type="term" value="P:translation"/>
    <property type="evidence" value="ECO:0007669"/>
    <property type="project" value="UniProtKB-UniRule"/>
</dbReference>
<dbReference type="HAMAP" id="MF_00251">
    <property type="entry name" value="Ribosomal_bL36"/>
    <property type="match status" value="1"/>
</dbReference>
<dbReference type="InterPro" id="IPR000473">
    <property type="entry name" value="Ribosomal_bL36"/>
</dbReference>
<dbReference type="InterPro" id="IPR035977">
    <property type="entry name" value="Ribosomal_bL36_sp"/>
</dbReference>
<dbReference type="InterPro" id="IPR047621">
    <property type="entry name" value="Ribosomal_L36_bact"/>
</dbReference>
<dbReference type="NCBIfam" id="NF002021">
    <property type="entry name" value="PRK00831.1"/>
    <property type="match status" value="1"/>
</dbReference>
<dbReference type="PANTHER" id="PTHR47781">
    <property type="entry name" value="50S RIBOSOMAL PROTEIN L36 2"/>
    <property type="match status" value="1"/>
</dbReference>
<dbReference type="PANTHER" id="PTHR47781:SF1">
    <property type="entry name" value="LARGE RIBOSOMAL SUBUNIT PROTEIN BL36B"/>
    <property type="match status" value="1"/>
</dbReference>
<dbReference type="Pfam" id="PF00444">
    <property type="entry name" value="Ribosomal_L36"/>
    <property type="match status" value="1"/>
</dbReference>
<dbReference type="SUPFAM" id="SSF57840">
    <property type="entry name" value="Ribosomal protein L36"/>
    <property type="match status" value="1"/>
</dbReference>
<dbReference type="PROSITE" id="PS00828">
    <property type="entry name" value="RIBOSOMAL_L36"/>
    <property type="match status" value="1"/>
</dbReference>
<comment type="similarity">
    <text evidence="1">Belongs to the bacterial ribosomal protein bL36 family.</text>
</comment>
<feature type="chain" id="PRO_1000204559" description="Large ribosomal subunit protein bL36">
    <location>
        <begin position="1"/>
        <end position="41"/>
    </location>
</feature>
<protein>
    <recommendedName>
        <fullName evidence="1">Large ribosomal subunit protein bL36</fullName>
    </recommendedName>
    <alternativeName>
        <fullName evidence="2">50S ribosomal protein L36</fullName>
    </alternativeName>
</protein>
<sequence length="41" mass="4833">MKVVSSLKSLKKRDKDCQIVKRRGKIFVINKKNKRFKAKQG</sequence>
<keyword id="KW-0687">Ribonucleoprotein</keyword>
<keyword id="KW-0689">Ribosomal protein</keyword>
<proteinExistence type="inferred from homology"/>
<reference key="1">
    <citation type="journal article" date="2009" name="BMC Genomics">
        <title>Analysis of the Rickettsia africae genome reveals that virulence acquisition in Rickettsia species may be explained by genome reduction.</title>
        <authorList>
            <person name="Fournier P.-E."/>
            <person name="El Karkouri K."/>
            <person name="Leroy Q."/>
            <person name="Robert C."/>
            <person name="Giumelli B."/>
            <person name="Renesto P."/>
            <person name="Socolovschi C."/>
            <person name="Parola P."/>
            <person name="Audic S."/>
            <person name="Raoult D."/>
        </authorList>
    </citation>
    <scope>NUCLEOTIDE SEQUENCE [LARGE SCALE GENOMIC DNA]</scope>
    <source>
        <strain>ESF-5</strain>
    </source>
</reference>